<sequence>MASRGNRARSQPVDNTISYVQCDGLAAMKMVKHCHEESLNNMEVAQGALLGLVVDDRLEITNCFPFPKSDETIDEEEYQLNMMRRLRHVNVDHFHVGWYQSADVGNFLSSTLLESQYHYQTSIEESVVVIYDTQKSARGFLTLKAYRLTPQAIAMYKERDFTPEALRNLKVGYENLFIEIPIVIKNSALCNIMMSELTELVPEEEGTHFLDLGTASVLENHLRCMMDRVDELNHEATKFNKYQQAAIRQEQEKHRMLAKHAQENAARIAKGEQAVPEEEVNKLFRPIPVPTRLNPMIVSGQINTYAQHISQFCSQSLAKLYMTQALQNAKDNKQ</sequence>
<protein>
    <recommendedName>
        <fullName evidence="1">Eukaryotic translation initiation factor 3 subunit H</fullName>
        <shortName evidence="1">eIF3h</shortName>
    </recommendedName>
</protein>
<reference key="1">
    <citation type="journal article" date="2002" name="Science">
        <title>The genome sequence of the malaria mosquito Anopheles gambiae.</title>
        <authorList>
            <person name="Holt R.A."/>
            <person name="Subramanian G.M."/>
            <person name="Halpern A."/>
            <person name="Sutton G.G."/>
            <person name="Charlab R."/>
            <person name="Nusskern D.R."/>
            <person name="Wincker P."/>
            <person name="Clark A.G."/>
            <person name="Ribeiro J.M.C."/>
            <person name="Wides R."/>
            <person name="Salzberg S.L."/>
            <person name="Loftus B.J."/>
            <person name="Yandell M.D."/>
            <person name="Majoros W.H."/>
            <person name="Rusch D.B."/>
            <person name="Lai Z."/>
            <person name="Kraft C.L."/>
            <person name="Abril J.F."/>
            <person name="Anthouard V."/>
            <person name="Arensburger P."/>
            <person name="Atkinson P.W."/>
            <person name="Baden H."/>
            <person name="de Berardinis V."/>
            <person name="Baldwin D."/>
            <person name="Benes V."/>
            <person name="Biedler J."/>
            <person name="Blass C."/>
            <person name="Bolanos R."/>
            <person name="Boscus D."/>
            <person name="Barnstead M."/>
            <person name="Cai S."/>
            <person name="Center A."/>
            <person name="Chaturverdi K."/>
            <person name="Christophides G.K."/>
            <person name="Chrystal M.A.M."/>
            <person name="Clamp M."/>
            <person name="Cravchik A."/>
            <person name="Curwen V."/>
            <person name="Dana A."/>
            <person name="Delcher A."/>
            <person name="Dew I."/>
            <person name="Evans C.A."/>
            <person name="Flanigan M."/>
            <person name="Grundschober-Freimoser A."/>
            <person name="Friedli L."/>
            <person name="Gu Z."/>
            <person name="Guan P."/>
            <person name="Guigo R."/>
            <person name="Hillenmeyer M.E."/>
            <person name="Hladun S.L."/>
            <person name="Hogan J.R."/>
            <person name="Hong Y.S."/>
            <person name="Hoover J."/>
            <person name="Jaillon O."/>
            <person name="Ke Z."/>
            <person name="Kodira C.D."/>
            <person name="Kokoza E."/>
            <person name="Koutsos A."/>
            <person name="Letunic I."/>
            <person name="Levitsky A.A."/>
            <person name="Liang Y."/>
            <person name="Lin J.-J."/>
            <person name="Lobo N.F."/>
            <person name="Lopez J.R."/>
            <person name="Malek J.A."/>
            <person name="McIntosh T.C."/>
            <person name="Meister S."/>
            <person name="Miller J.R."/>
            <person name="Mobarry C."/>
            <person name="Mongin E."/>
            <person name="Murphy S.D."/>
            <person name="O'Brochta D.A."/>
            <person name="Pfannkoch C."/>
            <person name="Qi R."/>
            <person name="Regier M.A."/>
            <person name="Remington K."/>
            <person name="Shao H."/>
            <person name="Sharakhova M.V."/>
            <person name="Sitter C.D."/>
            <person name="Shetty J."/>
            <person name="Smith T.J."/>
            <person name="Strong R."/>
            <person name="Sun J."/>
            <person name="Thomasova D."/>
            <person name="Ton L.Q."/>
            <person name="Topalis P."/>
            <person name="Tu Z.J."/>
            <person name="Unger M.F."/>
            <person name="Walenz B."/>
            <person name="Wang A.H."/>
            <person name="Wang J."/>
            <person name="Wang M."/>
            <person name="Wang X."/>
            <person name="Woodford K.J."/>
            <person name="Wortman J.R."/>
            <person name="Wu M."/>
            <person name="Yao A."/>
            <person name="Zdobnov E.M."/>
            <person name="Zhang H."/>
            <person name="Zhao Q."/>
            <person name="Zhao S."/>
            <person name="Zhu S.C."/>
            <person name="Zhimulev I."/>
            <person name="Coluzzi M."/>
            <person name="della Torre A."/>
            <person name="Roth C.W."/>
            <person name="Louis C."/>
            <person name="Kalush F."/>
            <person name="Mural R.J."/>
            <person name="Myers E.W."/>
            <person name="Adams M.D."/>
            <person name="Smith H.O."/>
            <person name="Broder S."/>
            <person name="Gardner M.J."/>
            <person name="Fraser C.M."/>
            <person name="Birney E."/>
            <person name="Bork P."/>
            <person name="Brey P.T."/>
            <person name="Venter J.C."/>
            <person name="Weissenbach J."/>
            <person name="Kafatos F.C."/>
            <person name="Collins F.H."/>
            <person name="Hoffman S.L."/>
        </authorList>
    </citation>
    <scope>NUCLEOTIDE SEQUENCE [LARGE SCALE GENOMIC DNA]</scope>
    <source>
        <strain>PEST</strain>
    </source>
</reference>
<evidence type="ECO:0000255" key="1">
    <source>
        <dbReference type="HAMAP-Rule" id="MF_03007"/>
    </source>
</evidence>
<evidence type="ECO:0000255" key="2">
    <source>
        <dbReference type="PROSITE-ProRule" id="PRU01182"/>
    </source>
</evidence>
<feature type="chain" id="PRO_0000365182" description="Eukaryotic translation initiation factor 3 subunit H">
    <location>
        <begin position="1"/>
        <end position="334"/>
    </location>
</feature>
<feature type="domain" description="MPN" evidence="2">
    <location>
        <begin position="20"/>
        <end position="152"/>
    </location>
</feature>
<comment type="function">
    <text evidence="1">Component of the eukaryotic translation initiation factor 3 (eIF-3) complex, which is involved in protein synthesis of a specialized repertoire of mRNAs and, together with other initiation factors, stimulates binding of mRNA and methionyl-tRNAi to the 40S ribosome. The eIF-3 complex specifically targets and initiates translation of a subset of mRNAs involved in cell proliferation.</text>
</comment>
<comment type="subunit">
    <text evidence="1">Component of the eukaryotic translation initiation factor 3 (eIF-3) complex.</text>
</comment>
<comment type="subcellular location">
    <subcellularLocation>
        <location evidence="1">Cytoplasm</location>
    </subcellularLocation>
</comment>
<comment type="similarity">
    <text evidence="1">Belongs to the eIF-3 subunit H family.</text>
</comment>
<dbReference type="EMBL" id="AAAB01008984">
    <property type="protein sequence ID" value="EAA14719.3"/>
    <property type="molecule type" value="Genomic_DNA"/>
</dbReference>
<dbReference type="SMR" id="Q7PVR3"/>
<dbReference type="FunCoup" id="Q7PVR3">
    <property type="interactions" value="2434"/>
</dbReference>
<dbReference type="STRING" id="7165.Q7PVR3"/>
<dbReference type="MEROPS" id="M67.971"/>
<dbReference type="PaxDb" id="7165-AGAP009204-PA"/>
<dbReference type="EnsemblMetazoa" id="AGAP009204-RA">
    <property type="protein sequence ID" value="AGAP009204-PA"/>
    <property type="gene ID" value="AGAP009204"/>
</dbReference>
<dbReference type="GeneID" id="1280165"/>
<dbReference type="KEGG" id="aga:1280165"/>
<dbReference type="CTD" id="8667"/>
<dbReference type="VEuPathDB" id="VectorBase:AGAMI1_010379"/>
<dbReference type="VEuPathDB" id="VectorBase:AGAP009204"/>
<dbReference type="eggNOG" id="KOG1560">
    <property type="taxonomic scope" value="Eukaryota"/>
</dbReference>
<dbReference type="HOGENOM" id="CLU_044094_0_0_1"/>
<dbReference type="InParanoid" id="Q7PVR3"/>
<dbReference type="OMA" id="WYQSTYF"/>
<dbReference type="PhylomeDB" id="Q7PVR3"/>
<dbReference type="Proteomes" id="UP000007062">
    <property type="component" value="Chromosome 3R"/>
</dbReference>
<dbReference type="GO" id="GO:0016282">
    <property type="term" value="C:eukaryotic 43S preinitiation complex"/>
    <property type="evidence" value="ECO:0000318"/>
    <property type="project" value="GO_Central"/>
</dbReference>
<dbReference type="GO" id="GO:0033290">
    <property type="term" value="C:eukaryotic 48S preinitiation complex"/>
    <property type="evidence" value="ECO:0007669"/>
    <property type="project" value="UniProtKB-UniRule"/>
</dbReference>
<dbReference type="GO" id="GO:0005852">
    <property type="term" value="C:eukaryotic translation initiation factor 3 complex"/>
    <property type="evidence" value="ECO:0000318"/>
    <property type="project" value="GO_Central"/>
</dbReference>
<dbReference type="GO" id="GO:0008237">
    <property type="term" value="F:metallopeptidase activity"/>
    <property type="evidence" value="ECO:0000318"/>
    <property type="project" value="GO_Central"/>
</dbReference>
<dbReference type="GO" id="GO:0003743">
    <property type="term" value="F:translation initiation factor activity"/>
    <property type="evidence" value="ECO:0007669"/>
    <property type="project" value="UniProtKB-UniRule"/>
</dbReference>
<dbReference type="GO" id="GO:0001732">
    <property type="term" value="P:formation of cytoplasmic translation initiation complex"/>
    <property type="evidence" value="ECO:0007669"/>
    <property type="project" value="UniProtKB-UniRule"/>
</dbReference>
<dbReference type="GO" id="GO:0006413">
    <property type="term" value="P:translational initiation"/>
    <property type="evidence" value="ECO:0000318"/>
    <property type="project" value="GO_Central"/>
</dbReference>
<dbReference type="CDD" id="cd08065">
    <property type="entry name" value="MPN_eIF3h"/>
    <property type="match status" value="1"/>
</dbReference>
<dbReference type="FunFam" id="3.40.140.10:FF:000045">
    <property type="entry name" value="Eukaryotic translation initiation factor 3 subunit H"/>
    <property type="match status" value="1"/>
</dbReference>
<dbReference type="Gene3D" id="3.40.140.10">
    <property type="entry name" value="Cytidine Deaminase, domain 2"/>
    <property type="match status" value="1"/>
</dbReference>
<dbReference type="HAMAP" id="MF_03007">
    <property type="entry name" value="eIF3h"/>
    <property type="match status" value="1"/>
</dbReference>
<dbReference type="InterPro" id="IPR027524">
    <property type="entry name" value="eIF3h"/>
</dbReference>
<dbReference type="InterPro" id="IPR045810">
    <property type="entry name" value="eIF3h_C"/>
</dbReference>
<dbReference type="InterPro" id="IPR000555">
    <property type="entry name" value="JAMM/MPN+_dom"/>
</dbReference>
<dbReference type="InterPro" id="IPR050242">
    <property type="entry name" value="JAMM_MPN+_peptidase_M67A"/>
</dbReference>
<dbReference type="InterPro" id="IPR037518">
    <property type="entry name" value="MPN"/>
</dbReference>
<dbReference type="PANTHER" id="PTHR10410">
    <property type="entry name" value="EUKARYOTIC TRANSLATION INITIATION FACTOR 3 -RELATED"/>
    <property type="match status" value="1"/>
</dbReference>
<dbReference type="Pfam" id="PF19445">
    <property type="entry name" value="eIF3h_C"/>
    <property type="match status" value="1"/>
</dbReference>
<dbReference type="Pfam" id="PF01398">
    <property type="entry name" value="JAB"/>
    <property type="match status" value="1"/>
</dbReference>
<dbReference type="SMART" id="SM00232">
    <property type="entry name" value="JAB_MPN"/>
    <property type="match status" value="1"/>
</dbReference>
<dbReference type="PROSITE" id="PS50249">
    <property type="entry name" value="MPN"/>
    <property type="match status" value="1"/>
</dbReference>
<accession>Q7PVR3</accession>
<name>EIF3H_ANOGA</name>
<organism>
    <name type="scientific">Anopheles gambiae</name>
    <name type="common">African malaria mosquito</name>
    <dbReference type="NCBI Taxonomy" id="7165"/>
    <lineage>
        <taxon>Eukaryota</taxon>
        <taxon>Metazoa</taxon>
        <taxon>Ecdysozoa</taxon>
        <taxon>Arthropoda</taxon>
        <taxon>Hexapoda</taxon>
        <taxon>Insecta</taxon>
        <taxon>Pterygota</taxon>
        <taxon>Neoptera</taxon>
        <taxon>Endopterygota</taxon>
        <taxon>Diptera</taxon>
        <taxon>Nematocera</taxon>
        <taxon>Culicoidea</taxon>
        <taxon>Culicidae</taxon>
        <taxon>Anophelinae</taxon>
        <taxon>Anopheles</taxon>
    </lineage>
</organism>
<gene>
    <name type="ORF">AGAP009204</name>
</gene>
<keyword id="KW-0963">Cytoplasm</keyword>
<keyword id="KW-0396">Initiation factor</keyword>
<keyword id="KW-0648">Protein biosynthesis</keyword>
<keyword id="KW-1185">Reference proteome</keyword>
<proteinExistence type="inferred from homology"/>